<accession>B7J228</accession>
<feature type="chain" id="PRO_1000119313" description="Nucleoid-associated protein EbfC">
    <location>
        <begin position="1"/>
        <end position="99"/>
    </location>
</feature>
<evidence type="ECO:0000255" key="1">
    <source>
        <dbReference type="HAMAP-Rule" id="MF_00274"/>
    </source>
</evidence>
<organism>
    <name type="scientific">Borreliella burgdorferi (strain ZS7)</name>
    <name type="common">Borrelia burgdorferi</name>
    <dbReference type="NCBI Taxonomy" id="445985"/>
    <lineage>
        <taxon>Bacteria</taxon>
        <taxon>Pseudomonadati</taxon>
        <taxon>Spirochaetota</taxon>
        <taxon>Spirochaetia</taxon>
        <taxon>Spirochaetales</taxon>
        <taxon>Borreliaceae</taxon>
        <taxon>Borreliella</taxon>
    </lineage>
</organism>
<keyword id="KW-0963">Cytoplasm</keyword>
<keyword id="KW-0238">DNA-binding</keyword>
<comment type="function">
    <text evidence="1">Binds to DNA and alters its conformation. May be involved in regulation of gene expression, nucleoid organization and DNA protection.</text>
</comment>
<comment type="subunit">
    <text evidence="1">Homodimer.</text>
</comment>
<comment type="subcellular location">
    <subcellularLocation>
        <location evidence="1">Cytoplasm</location>
        <location evidence="1">Nucleoid</location>
    </subcellularLocation>
</comment>
<comment type="similarity">
    <text evidence="1">Belongs to the YbaB/EbfC family.</text>
</comment>
<reference key="1">
    <citation type="journal article" date="2011" name="J. Bacteriol.">
        <title>Whole-genome sequences of thirteen isolates of Borrelia burgdorferi.</title>
        <authorList>
            <person name="Schutzer S.E."/>
            <person name="Fraser-Liggett C.M."/>
            <person name="Casjens S.R."/>
            <person name="Qiu W.G."/>
            <person name="Dunn J.J."/>
            <person name="Mongodin E.F."/>
            <person name="Luft B.J."/>
        </authorList>
    </citation>
    <scope>NUCLEOTIDE SEQUENCE [LARGE SCALE GENOMIC DNA]</scope>
    <source>
        <strain>ZS7</strain>
    </source>
</reference>
<protein>
    <recommendedName>
        <fullName evidence="1">Nucleoid-associated protein EbfC</fullName>
    </recommendedName>
</protein>
<dbReference type="EMBL" id="CP001205">
    <property type="protein sequence ID" value="ACK75094.1"/>
    <property type="molecule type" value="Genomic_DNA"/>
</dbReference>
<dbReference type="SMR" id="B7J228"/>
<dbReference type="KEGG" id="bbz:BbuZS7_0474"/>
<dbReference type="HOGENOM" id="CLU_140930_4_1_12"/>
<dbReference type="Proteomes" id="UP000006901">
    <property type="component" value="Chromosome"/>
</dbReference>
<dbReference type="GO" id="GO:0043590">
    <property type="term" value="C:bacterial nucleoid"/>
    <property type="evidence" value="ECO:0007669"/>
    <property type="project" value="UniProtKB-UniRule"/>
</dbReference>
<dbReference type="GO" id="GO:0005737">
    <property type="term" value="C:cytoplasm"/>
    <property type="evidence" value="ECO:0007669"/>
    <property type="project" value="UniProtKB-UniRule"/>
</dbReference>
<dbReference type="GO" id="GO:0003677">
    <property type="term" value="F:DNA binding"/>
    <property type="evidence" value="ECO:0007669"/>
    <property type="project" value="UniProtKB-UniRule"/>
</dbReference>
<dbReference type="Gene3D" id="3.30.1310.10">
    <property type="entry name" value="Nucleoid-associated protein YbaB-like domain"/>
    <property type="match status" value="1"/>
</dbReference>
<dbReference type="HAMAP" id="MF_00274">
    <property type="entry name" value="DNA_YbaB_EbfC"/>
    <property type="match status" value="1"/>
</dbReference>
<dbReference type="InterPro" id="IPR036894">
    <property type="entry name" value="YbaB-like_sf"/>
</dbReference>
<dbReference type="InterPro" id="IPR004401">
    <property type="entry name" value="YbaB/EbfC"/>
</dbReference>
<dbReference type="NCBIfam" id="TIGR00103">
    <property type="entry name" value="DNA_YbaB_EbfC"/>
    <property type="match status" value="1"/>
</dbReference>
<dbReference type="Pfam" id="PF02575">
    <property type="entry name" value="YbaB_DNA_bd"/>
    <property type="match status" value="1"/>
</dbReference>
<dbReference type="PIRSF" id="PIRSF004555">
    <property type="entry name" value="UCP004555"/>
    <property type="match status" value="1"/>
</dbReference>
<dbReference type="SUPFAM" id="SSF82607">
    <property type="entry name" value="YbaB-like"/>
    <property type="match status" value="1"/>
</dbReference>
<sequence>MAVNPLDFLKNMSSVKNNIDNIKKEISKITVCGKAGSNIVAIEMDGEFNVKKVSINKEFFDDLDNDAFEQMIKSALNDAVSKVKEEIKLKTMGVLPFGM</sequence>
<gene>
    <name evidence="1" type="primary">ebfC</name>
    <name type="ordered locus">BbuZS7_0474</name>
</gene>
<name>EBFC_BORBZ</name>
<proteinExistence type="inferred from homology"/>